<gene>
    <name type="primary">Msh6</name>
    <name type="ORF">CG7003</name>
</gene>
<accession>Q9VUM0</accession>
<accession>B6IDV3</accession>
<name>MSH6_DROME</name>
<comment type="function">
    <text evidence="4">Involved in post-replicative DNA-mismatch repair.</text>
</comment>
<comment type="subunit">
    <text evidence="1">Heterodimer of Msh2/Spel and Msh6.</text>
</comment>
<comment type="similarity">
    <text evidence="6">Belongs to the DNA mismatch repair MutS family.</text>
</comment>
<dbReference type="EMBL" id="AE014296">
    <property type="protein sequence ID" value="AAF49656.2"/>
    <property type="molecule type" value="Genomic_DNA"/>
</dbReference>
<dbReference type="EMBL" id="BT050543">
    <property type="protein sequence ID" value="ACJ13250.1"/>
    <property type="molecule type" value="mRNA"/>
</dbReference>
<dbReference type="RefSeq" id="NP_648755.1">
    <property type="nucleotide sequence ID" value="NM_140498.2"/>
</dbReference>
<dbReference type="SMR" id="Q9VUM0"/>
<dbReference type="BioGRID" id="64976">
    <property type="interactions" value="3"/>
</dbReference>
<dbReference type="DIP" id="DIP-23712N"/>
<dbReference type="FunCoup" id="Q9VUM0">
    <property type="interactions" value="2080"/>
</dbReference>
<dbReference type="IntAct" id="Q9VUM0">
    <property type="interactions" value="4"/>
</dbReference>
<dbReference type="STRING" id="7227.FBpp0075399"/>
<dbReference type="GlyGen" id="Q9VUM0">
    <property type="glycosylation" value="1 site"/>
</dbReference>
<dbReference type="iPTMnet" id="Q9VUM0"/>
<dbReference type="PaxDb" id="7227-FBpp0075399"/>
<dbReference type="EnsemblMetazoa" id="FBtr0075646">
    <property type="protein sequence ID" value="FBpp0075399"/>
    <property type="gene ID" value="FBgn0036486"/>
</dbReference>
<dbReference type="GeneID" id="39654"/>
<dbReference type="KEGG" id="dme:Dmel_CG7003"/>
<dbReference type="UCSC" id="CG7003-RA">
    <property type="organism name" value="d. melanogaster"/>
</dbReference>
<dbReference type="AGR" id="FB:FBgn0036486"/>
<dbReference type="CTD" id="2956"/>
<dbReference type="FlyBase" id="FBgn0036486">
    <property type="gene designation" value="Msh6"/>
</dbReference>
<dbReference type="VEuPathDB" id="VectorBase:FBgn0036486"/>
<dbReference type="eggNOG" id="KOG0217">
    <property type="taxonomic scope" value="Eukaryota"/>
</dbReference>
<dbReference type="GeneTree" id="ENSGT00550000075024"/>
<dbReference type="HOGENOM" id="CLU_002472_1_3_1"/>
<dbReference type="InParanoid" id="Q9VUM0"/>
<dbReference type="OMA" id="TPMMAQY"/>
<dbReference type="OrthoDB" id="121051at2759"/>
<dbReference type="PhylomeDB" id="Q9VUM0"/>
<dbReference type="Reactome" id="R-DME-5358565">
    <property type="pathway name" value="Mismatch repair (MMR) directed by MSH2:MSH6 (MutSalpha)"/>
</dbReference>
<dbReference type="SignaLink" id="Q9VUM0"/>
<dbReference type="BioGRID-ORCS" id="39654">
    <property type="hits" value="0 hits in 1 CRISPR screen"/>
</dbReference>
<dbReference type="GenomeRNAi" id="39654"/>
<dbReference type="PRO" id="PR:Q9VUM0"/>
<dbReference type="Proteomes" id="UP000000803">
    <property type="component" value="Chromosome 3L"/>
</dbReference>
<dbReference type="Bgee" id="FBgn0036486">
    <property type="expression patterns" value="Expressed in secondary oocyte and 32 other cell types or tissues"/>
</dbReference>
<dbReference type="GO" id="GO:0032301">
    <property type="term" value="C:MutSalpha complex"/>
    <property type="evidence" value="ECO:0000318"/>
    <property type="project" value="GO_Central"/>
</dbReference>
<dbReference type="GO" id="GO:0005634">
    <property type="term" value="C:nucleus"/>
    <property type="evidence" value="ECO:0000318"/>
    <property type="project" value="GO_Central"/>
</dbReference>
<dbReference type="GO" id="GO:0005524">
    <property type="term" value="F:ATP binding"/>
    <property type="evidence" value="ECO:0007669"/>
    <property type="project" value="UniProtKB-KW"/>
</dbReference>
<dbReference type="GO" id="GO:0016887">
    <property type="term" value="F:ATP hydrolysis activity"/>
    <property type="evidence" value="ECO:0000250"/>
    <property type="project" value="FlyBase"/>
</dbReference>
<dbReference type="GO" id="GO:0140664">
    <property type="term" value="F:ATP-dependent DNA damage sensor activity"/>
    <property type="evidence" value="ECO:0007669"/>
    <property type="project" value="InterPro"/>
</dbReference>
<dbReference type="GO" id="GO:0030983">
    <property type="term" value="F:mismatched DNA binding"/>
    <property type="evidence" value="ECO:0000318"/>
    <property type="project" value="GO_Central"/>
</dbReference>
<dbReference type="GO" id="GO:0006281">
    <property type="term" value="P:DNA repair"/>
    <property type="evidence" value="ECO:0000250"/>
    <property type="project" value="FlyBase"/>
</dbReference>
<dbReference type="GO" id="GO:0000710">
    <property type="term" value="P:meiotic mismatch repair"/>
    <property type="evidence" value="ECO:0000315"/>
    <property type="project" value="FlyBase"/>
</dbReference>
<dbReference type="GO" id="GO:0006298">
    <property type="term" value="P:mismatch repair"/>
    <property type="evidence" value="ECO:0000318"/>
    <property type="project" value="GO_Central"/>
</dbReference>
<dbReference type="CDD" id="cd03286">
    <property type="entry name" value="ABC_MSH6_euk"/>
    <property type="match status" value="1"/>
</dbReference>
<dbReference type="FunFam" id="1.10.1420.10:FF:000005">
    <property type="entry name" value="DNA mismatch repair protein"/>
    <property type="match status" value="1"/>
</dbReference>
<dbReference type="FunFam" id="3.30.420.110:FF:000027">
    <property type="entry name" value="DNA mismatch repair protein"/>
    <property type="match status" value="1"/>
</dbReference>
<dbReference type="FunFam" id="3.40.1170.10:FF:000002">
    <property type="entry name" value="DNA mismatch repair protein"/>
    <property type="match status" value="1"/>
</dbReference>
<dbReference type="FunFam" id="3.40.50.300:FF:002677">
    <property type="entry name" value="DNA mismatch repair protein"/>
    <property type="match status" value="1"/>
</dbReference>
<dbReference type="Gene3D" id="1.10.1420.10">
    <property type="match status" value="2"/>
</dbReference>
<dbReference type="Gene3D" id="3.40.1170.10">
    <property type="entry name" value="DNA repair protein MutS, domain I"/>
    <property type="match status" value="1"/>
</dbReference>
<dbReference type="Gene3D" id="3.30.420.110">
    <property type="entry name" value="MutS, connector domain"/>
    <property type="match status" value="1"/>
</dbReference>
<dbReference type="Gene3D" id="3.40.50.300">
    <property type="entry name" value="P-loop containing nucleotide triphosphate hydrolases"/>
    <property type="match status" value="1"/>
</dbReference>
<dbReference type="InterPro" id="IPR007695">
    <property type="entry name" value="DNA_mismatch_repair_MutS-lik_N"/>
</dbReference>
<dbReference type="InterPro" id="IPR017261">
    <property type="entry name" value="DNA_mismatch_repair_MutS/MSH"/>
</dbReference>
<dbReference type="InterPro" id="IPR000432">
    <property type="entry name" value="DNA_mismatch_repair_MutS_C"/>
</dbReference>
<dbReference type="InterPro" id="IPR007861">
    <property type="entry name" value="DNA_mismatch_repair_MutS_clamp"/>
</dbReference>
<dbReference type="InterPro" id="IPR007696">
    <property type="entry name" value="DNA_mismatch_repair_MutS_core"/>
</dbReference>
<dbReference type="InterPro" id="IPR016151">
    <property type="entry name" value="DNA_mismatch_repair_MutS_N"/>
</dbReference>
<dbReference type="InterPro" id="IPR036187">
    <property type="entry name" value="DNA_mismatch_repair_MutS_sf"/>
</dbReference>
<dbReference type="InterPro" id="IPR007860">
    <property type="entry name" value="DNA_mmatch_repair_MutS_con_dom"/>
</dbReference>
<dbReference type="InterPro" id="IPR045076">
    <property type="entry name" value="MutS"/>
</dbReference>
<dbReference type="InterPro" id="IPR036678">
    <property type="entry name" value="MutS_con_dom_sf"/>
</dbReference>
<dbReference type="InterPro" id="IPR027417">
    <property type="entry name" value="P-loop_NTPase"/>
</dbReference>
<dbReference type="PANTHER" id="PTHR11361:SF148">
    <property type="entry name" value="DNA MISMATCH REPAIR PROTEIN MSH6"/>
    <property type="match status" value="1"/>
</dbReference>
<dbReference type="PANTHER" id="PTHR11361">
    <property type="entry name" value="DNA MISMATCH REPAIR PROTEIN MUTS FAMILY MEMBER"/>
    <property type="match status" value="1"/>
</dbReference>
<dbReference type="Pfam" id="PF01624">
    <property type="entry name" value="MutS_I"/>
    <property type="match status" value="1"/>
</dbReference>
<dbReference type="Pfam" id="PF05188">
    <property type="entry name" value="MutS_II"/>
    <property type="match status" value="1"/>
</dbReference>
<dbReference type="Pfam" id="PF05192">
    <property type="entry name" value="MutS_III"/>
    <property type="match status" value="1"/>
</dbReference>
<dbReference type="Pfam" id="PF05190">
    <property type="entry name" value="MutS_IV"/>
    <property type="match status" value="1"/>
</dbReference>
<dbReference type="Pfam" id="PF00488">
    <property type="entry name" value="MutS_V"/>
    <property type="match status" value="1"/>
</dbReference>
<dbReference type="PIRSF" id="PIRSF037677">
    <property type="entry name" value="DNA_mis_repair_Msh6"/>
    <property type="match status" value="1"/>
</dbReference>
<dbReference type="SMART" id="SM00534">
    <property type="entry name" value="MUTSac"/>
    <property type="match status" value="1"/>
</dbReference>
<dbReference type="SMART" id="SM00533">
    <property type="entry name" value="MUTSd"/>
    <property type="match status" value="1"/>
</dbReference>
<dbReference type="SUPFAM" id="SSF55271">
    <property type="entry name" value="DNA repair protein MutS, domain I"/>
    <property type="match status" value="1"/>
</dbReference>
<dbReference type="SUPFAM" id="SSF53150">
    <property type="entry name" value="DNA repair protein MutS, domain II"/>
    <property type="match status" value="1"/>
</dbReference>
<dbReference type="SUPFAM" id="SSF48334">
    <property type="entry name" value="DNA repair protein MutS, domain III"/>
    <property type="match status" value="1"/>
</dbReference>
<dbReference type="SUPFAM" id="SSF52540">
    <property type="entry name" value="P-loop containing nucleoside triphosphate hydrolases"/>
    <property type="match status" value="1"/>
</dbReference>
<dbReference type="PROSITE" id="PS00486">
    <property type="entry name" value="DNA_MISMATCH_REPAIR_2"/>
    <property type="match status" value="1"/>
</dbReference>
<evidence type="ECO:0000250" key="1"/>
<evidence type="ECO:0000255" key="2"/>
<evidence type="ECO:0000256" key="3">
    <source>
        <dbReference type="SAM" id="MobiDB-lite"/>
    </source>
</evidence>
<evidence type="ECO:0000269" key="4">
    <source>
    </source>
</evidence>
<evidence type="ECO:0000269" key="5">
    <source>
    </source>
</evidence>
<evidence type="ECO:0000305" key="6"/>
<sequence>MSKKLNTSVGGTPTNTLLNYFSKSPAFDKKKLTPSVKTDPDASKSEKENLQNQQPKVKDGKKEASKPAAKRKLPISDDEPASGQRKRKRIVQPESDSEPEMEVTKSEDDFSDCASDYEPDENEASDDSVSSGAEEVSPSENDMSVDSPTPKKSRKKSKILNNNNNNEPSSKKVKLESTIQLAEGATFQEKLKNLQSNAKQDASYDDIVTNTSNLDEPVVWPHQKLEFLQPDKIKDKEGRRPDHPDYDKSTLHVPEKFLNGLSPGVRQWWVLKSDNYDCVLFFKVGKFYELYHMDADVGVNELGFTYMRGEFAHSGFPEISFDKMSTILVDRGFKVARVEQTETPDMMTERCKRIKATKFDKVVAREICQITNRGTQVFGSQCKIGPNHQPNYMLAIVEKDEGTCSRYGVCFIDTSIGDFHLGEFEDDKNCSRLLTLVSHHMPVLFLNEKSALSQRTQQIVRTVLGGILKEPVPGNGKHACSAEKTLKLLAERYYAGPGSDDNWPLVLRTMQSDMDHLGLTPNDNYKLALKALGQCIFFIHKCKLEPKVLPMARYQLYVPPDQLADAKPAVASTLRRSHMVLDATTLSNLRIIGEEHSLLSTLDHCCTKFGKRLLHHWLCAPSCDVSVIKERQDAIGELIRMPTELQEVRALLAPMPDFERNLAQIHLFGNKQIKQMDHPDSRAILFEEKLYNKQKLQGFMAVLKGFNDLTKLPTMFHQCKTTLLKRITQLPESGGSFPDLSKELQYFATAFDHDAAAKTGVIAPQAGMDAEYDAAMDSIGEVEKRLKTYLVEQERHFGCRITYFGSDKKRYQLDVPESHASKANKSYTLEGQTKGKKPSRRYTTAETRALLKDMQHAEDTRNMVLKDLARRLFEKFSNHYDQWKQCIDCVANLDVLGSLAEYAGQQMVICVPELVSDADQPFIQLEEGYHPCANASTYIPNGLELGTASEAPLSLLTGPNMGGKSTLMREVGLLVIMAQIGAHIPAASCRLSLVDRIFTRLGAQDDILAGHSTFLVELNETSLILKHATCHSLVLLDELGRGTATYDGTAIAASVVNFLANLKCRTLFSTHYHNLIDFFHNDKRITLGHMACMVENEDNADPTQETVTFLYKYTAGACPKSYGFNAAKLAGMPQGIIKRAYELSKKVEAIALQRKITAKIVAATAGNEDTKKEKINALKDLLKQLKMCQV</sequence>
<reference key="1">
    <citation type="journal article" date="2000" name="Science">
        <title>The genome sequence of Drosophila melanogaster.</title>
        <authorList>
            <person name="Adams M.D."/>
            <person name="Celniker S.E."/>
            <person name="Holt R.A."/>
            <person name="Evans C.A."/>
            <person name="Gocayne J.D."/>
            <person name="Amanatides P.G."/>
            <person name="Scherer S.E."/>
            <person name="Li P.W."/>
            <person name="Hoskins R.A."/>
            <person name="Galle R.F."/>
            <person name="George R.A."/>
            <person name="Lewis S.E."/>
            <person name="Richards S."/>
            <person name="Ashburner M."/>
            <person name="Henderson S.N."/>
            <person name="Sutton G.G."/>
            <person name="Wortman J.R."/>
            <person name="Yandell M.D."/>
            <person name="Zhang Q."/>
            <person name="Chen L.X."/>
            <person name="Brandon R.C."/>
            <person name="Rogers Y.-H.C."/>
            <person name="Blazej R.G."/>
            <person name="Champe M."/>
            <person name="Pfeiffer B.D."/>
            <person name="Wan K.H."/>
            <person name="Doyle C."/>
            <person name="Baxter E.G."/>
            <person name="Helt G."/>
            <person name="Nelson C.R."/>
            <person name="Miklos G.L.G."/>
            <person name="Abril J.F."/>
            <person name="Agbayani A."/>
            <person name="An H.-J."/>
            <person name="Andrews-Pfannkoch C."/>
            <person name="Baldwin D."/>
            <person name="Ballew R.M."/>
            <person name="Basu A."/>
            <person name="Baxendale J."/>
            <person name="Bayraktaroglu L."/>
            <person name="Beasley E.M."/>
            <person name="Beeson K.Y."/>
            <person name="Benos P.V."/>
            <person name="Berman B.P."/>
            <person name="Bhandari D."/>
            <person name="Bolshakov S."/>
            <person name="Borkova D."/>
            <person name="Botchan M.R."/>
            <person name="Bouck J."/>
            <person name="Brokstein P."/>
            <person name="Brottier P."/>
            <person name="Burtis K.C."/>
            <person name="Busam D.A."/>
            <person name="Butler H."/>
            <person name="Cadieu E."/>
            <person name="Center A."/>
            <person name="Chandra I."/>
            <person name="Cherry J.M."/>
            <person name="Cawley S."/>
            <person name="Dahlke C."/>
            <person name="Davenport L.B."/>
            <person name="Davies P."/>
            <person name="de Pablos B."/>
            <person name="Delcher A."/>
            <person name="Deng Z."/>
            <person name="Mays A.D."/>
            <person name="Dew I."/>
            <person name="Dietz S.M."/>
            <person name="Dodson K."/>
            <person name="Doup L.E."/>
            <person name="Downes M."/>
            <person name="Dugan-Rocha S."/>
            <person name="Dunkov B.C."/>
            <person name="Dunn P."/>
            <person name="Durbin K.J."/>
            <person name="Evangelista C.C."/>
            <person name="Ferraz C."/>
            <person name="Ferriera S."/>
            <person name="Fleischmann W."/>
            <person name="Fosler C."/>
            <person name="Gabrielian A.E."/>
            <person name="Garg N.S."/>
            <person name="Gelbart W.M."/>
            <person name="Glasser K."/>
            <person name="Glodek A."/>
            <person name="Gong F."/>
            <person name="Gorrell J.H."/>
            <person name="Gu Z."/>
            <person name="Guan P."/>
            <person name="Harris M."/>
            <person name="Harris N.L."/>
            <person name="Harvey D.A."/>
            <person name="Heiman T.J."/>
            <person name="Hernandez J.R."/>
            <person name="Houck J."/>
            <person name="Hostin D."/>
            <person name="Houston K.A."/>
            <person name="Howland T.J."/>
            <person name="Wei M.-H."/>
            <person name="Ibegwam C."/>
            <person name="Jalali M."/>
            <person name="Kalush F."/>
            <person name="Karpen G.H."/>
            <person name="Ke Z."/>
            <person name="Kennison J.A."/>
            <person name="Ketchum K.A."/>
            <person name="Kimmel B.E."/>
            <person name="Kodira C.D."/>
            <person name="Kraft C.L."/>
            <person name="Kravitz S."/>
            <person name="Kulp D."/>
            <person name="Lai Z."/>
            <person name="Lasko P."/>
            <person name="Lei Y."/>
            <person name="Levitsky A.A."/>
            <person name="Li J.H."/>
            <person name="Li Z."/>
            <person name="Liang Y."/>
            <person name="Lin X."/>
            <person name="Liu X."/>
            <person name="Mattei B."/>
            <person name="McIntosh T.C."/>
            <person name="McLeod M.P."/>
            <person name="McPherson D."/>
            <person name="Merkulov G."/>
            <person name="Milshina N.V."/>
            <person name="Mobarry C."/>
            <person name="Morris J."/>
            <person name="Moshrefi A."/>
            <person name="Mount S.M."/>
            <person name="Moy M."/>
            <person name="Murphy B."/>
            <person name="Murphy L."/>
            <person name="Muzny D.M."/>
            <person name="Nelson D.L."/>
            <person name="Nelson D.R."/>
            <person name="Nelson K.A."/>
            <person name="Nixon K."/>
            <person name="Nusskern D.R."/>
            <person name="Pacleb J.M."/>
            <person name="Palazzolo M."/>
            <person name="Pittman G.S."/>
            <person name="Pan S."/>
            <person name="Pollard J."/>
            <person name="Puri V."/>
            <person name="Reese M.G."/>
            <person name="Reinert K."/>
            <person name="Remington K."/>
            <person name="Saunders R.D.C."/>
            <person name="Scheeler F."/>
            <person name="Shen H."/>
            <person name="Shue B.C."/>
            <person name="Siden-Kiamos I."/>
            <person name="Simpson M."/>
            <person name="Skupski M.P."/>
            <person name="Smith T.J."/>
            <person name="Spier E."/>
            <person name="Spradling A.C."/>
            <person name="Stapleton M."/>
            <person name="Strong R."/>
            <person name="Sun E."/>
            <person name="Svirskas R."/>
            <person name="Tector C."/>
            <person name="Turner R."/>
            <person name="Venter E."/>
            <person name="Wang A.H."/>
            <person name="Wang X."/>
            <person name="Wang Z.-Y."/>
            <person name="Wassarman D.A."/>
            <person name="Weinstock G.M."/>
            <person name="Weissenbach J."/>
            <person name="Williams S.M."/>
            <person name="Woodage T."/>
            <person name="Worley K.C."/>
            <person name="Wu D."/>
            <person name="Yang S."/>
            <person name="Yao Q.A."/>
            <person name="Ye J."/>
            <person name="Yeh R.-F."/>
            <person name="Zaveri J.S."/>
            <person name="Zhan M."/>
            <person name="Zhang G."/>
            <person name="Zhao Q."/>
            <person name="Zheng L."/>
            <person name="Zheng X.H."/>
            <person name="Zhong F.N."/>
            <person name="Zhong W."/>
            <person name="Zhou X."/>
            <person name="Zhu S.C."/>
            <person name="Zhu X."/>
            <person name="Smith H.O."/>
            <person name="Gibbs R.A."/>
            <person name="Myers E.W."/>
            <person name="Rubin G.M."/>
            <person name="Venter J.C."/>
        </authorList>
    </citation>
    <scope>NUCLEOTIDE SEQUENCE [LARGE SCALE GENOMIC DNA]</scope>
    <source>
        <strain>Berkeley</strain>
    </source>
</reference>
<reference key="2">
    <citation type="journal article" date="2002" name="Genome Biol.">
        <title>Annotation of the Drosophila melanogaster euchromatic genome: a systematic review.</title>
        <authorList>
            <person name="Misra S."/>
            <person name="Crosby M.A."/>
            <person name="Mungall C.J."/>
            <person name="Matthews B.B."/>
            <person name="Campbell K.S."/>
            <person name="Hradecky P."/>
            <person name="Huang Y."/>
            <person name="Kaminker J.S."/>
            <person name="Millburn G.H."/>
            <person name="Prochnik S.E."/>
            <person name="Smith C.D."/>
            <person name="Tupy J.L."/>
            <person name="Whitfield E.J."/>
            <person name="Bayraktaroglu L."/>
            <person name="Berman B.P."/>
            <person name="Bettencourt B.R."/>
            <person name="Celniker S.E."/>
            <person name="de Grey A.D.N.J."/>
            <person name="Drysdale R.A."/>
            <person name="Harris N.L."/>
            <person name="Richter J."/>
            <person name="Russo S."/>
            <person name="Schroeder A.J."/>
            <person name="Shu S.Q."/>
            <person name="Stapleton M."/>
            <person name="Yamada C."/>
            <person name="Ashburner M."/>
            <person name="Gelbart W.M."/>
            <person name="Rubin G.M."/>
            <person name="Lewis S.E."/>
        </authorList>
    </citation>
    <scope>GENOME REANNOTATION</scope>
    <source>
        <strain>Berkeley</strain>
    </source>
</reference>
<reference key="3">
    <citation type="submission" date="2008-11" db="EMBL/GenBank/DDBJ databases">
        <authorList>
            <person name="Carlson J.W."/>
            <person name="Booth B."/>
            <person name="Frise E."/>
            <person name="Park S."/>
            <person name="Wan K.H."/>
            <person name="Yu C."/>
            <person name="Celniker S.E."/>
        </authorList>
    </citation>
    <scope>NUCLEOTIDE SEQUENCE [LARGE SCALE MRNA]</scope>
    <source>
        <strain>Berkeley</strain>
        <tissue>Embryo</tissue>
    </source>
</reference>
<reference key="4">
    <citation type="journal article" date="2007" name="Genetics">
        <title>Meiotic recombination in Drosophila Msh6 mutants yields discontinuous gene conversion tracts.</title>
        <authorList>
            <person name="Radford S.J."/>
            <person name="Sabourin M.M."/>
            <person name="McMahan S."/>
            <person name="Sekelsky J."/>
        </authorList>
    </citation>
    <scope>FUNCTION</scope>
</reference>
<reference key="5">
    <citation type="journal article" date="2008" name="J. Proteome Res.">
        <title>Phosphoproteome analysis of Drosophila melanogaster embryos.</title>
        <authorList>
            <person name="Zhai B."/>
            <person name="Villen J."/>
            <person name="Beausoleil S.A."/>
            <person name="Mintseris J."/>
            <person name="Gygi S.P."/>
        </authorList>
    </citation>
    <scope>PHOSPHORYLATION [LARGE SCALE ANALYSIS] AT THR-7; SER-8; THR-12; THR-14; THR-16; SER-22; SER-24; THR-33; SER-95 AND SER-97</scope>
    <scope>IDENTIFICATION BY MASS SPECTROMETRY</scope>
    <source>
        <tissue>Embryo</tissue>
    </source>
</reference>
<proteinExistence type="evidence at protein level"/>
<organism>
    <name type="scientific">Drosophila melanogaster</name>
    <name type="common">Fruit fly</name>
    <dbReference type="NCBI Taxonomy" id="7227"/>
    <lineage>
        <taxon>Eukaryota</taxon>
        <taxon>Metazoa</taxon>
        <taxon>Ecdysozoa</taxon>
        <taxon>Arthropoda</taxon>
        <taxon>Hexapoda</taxon>
        <taxon>Insecta</taxon>
        <taxon>Pterygota</taxon>
        <taxon>Neoptera</taxon>
        <taxon>Endopterygota</taxon>
        <taxon>Diptera</taxon>
        <taxon>Brachycera</taxon>
        <taxon>Muscomorpha</taxon>
        <taxon>Ephydroidea</taxon>
        <taxon>Drosophilidae</taxon>
        <taxon>Drosophila</taxon>
        <taxon>Sophophora</taxon>
    </lineage>
</organism>
<protein>
    <recommendedName>
        <fullName>Probable DNA mismatch repair protein Msh6</fullName>
    </recommendedName>
</protein>
<keyword id="KW-0067">ATP-binding</keyword>
<keyword id="KW-0227">DNA damage</keyword>
<keyword id="KW-0234">DNA repair</keyword>
<keyword id="KW-0238">DNA-binding</keyword>
<keyword id="KW-0547">Nucleotide-binding</keyword>
<keyword id="KW-0597">Phosphoprotein</keyword>
<keyword id="KW-1185">Reference proteome</keyword>
<feature type="chain" id="PRO_0000115209" description="Probable DNA mismatch repair protein Msh6">
    <location>
        <begin position="1"/>
        <end position="1190"/>
    </location>
</feature>
<feature type="region of interest" description="Disordered" evidence="3">
    <location>
        <begin position="1"/>
        <end position="174"/>
    </location>
</feature>
<feature type="region of interest" description="Disordered" evidence="3">
    <location>
        <begin position="230"/>
        <end position="249"/>
    </location>
</feature>
<feature type="region of interest" description="Disordered" evidence="3">
    <location>
        <begin position="824"/>
        <end position="843"/>
    </location>
</feature>
<feature type="compositionally biased region" description="Polar residues" evidence="3">
    <location>
        <begin position="1"/>
        <end position="22"/>
    </location>
</feature>
<feature type="compositionally biased region" description="Basic and acidic residues" evidence="3">
    <location>
        <begin position="38"/>
        <end position="49"/>
    </location>
</feature>
<feature type="compositionally biased region" description="Basic and acidic residues" evidence="3">
    <location>
        <begin position="56"/>
        <end position="65"/>
    </location>
</feature>
<feature type="compositionally biased region" description="Acidic residues" evidence="3">
    <location>
        <begin position="109"/>
        <end position="126"/>
    </location>
</feature>
<feature type="compositionally biased region" description="Polar residues" evidence="3">
    <location>
        <begin position="138"/>
        <end position="147"/>
    </location>
</feature>
<feature type="compositionally biased region" description="Low complexity" evidence="3">
    <location>
        <begin position="159"/>
        <end position="168"/>
    </location>
</feature>
<feature type="binding site" evidence="2">
    <location>
        <begin position="958"/>
        <end position="965"/>
    </location>
    <ligand>
        <name>ATP</name>
        <dbReference type="ChEBI" id="CHEBI:30616"/>
    </ligand>
</feature>
<feature type="modified residue" description="Phosphothreonine" evidence="5">
    <location>
        <position position="7"/>
    </location>
</feature>
<feature type="modified residue" description="Phosphoserine" evidence="5">
    <location>
        <position position="8"/>
    </location>
</feature>
<feature type="modified residue" description="Phosphothreonine" evidence="5">
    <location>
        <position position="12"/>
    </location>
</feature>
<feature type="modified residue" description="Phosphothreonine" evidence="5">
    <location>
        <position position="14"/>
    </location>
</feature>
<feature type="modified residue" description="Phosphothreonine" evidence="5">
    <location>
        <position position="16"/>
    </location>
</feature>
<feature type="modified residue" description="Phosphoserine" evidence="5">
    <location>
        <position position="22"/>
    </location>
</feature>
<feature type="modified residue" description="Phosphoserine" evidence="5">
    <location>
        <position position="24"/>
    </location>
</feature>
<feature type="modified residue" description="Phosphothreonine" evidence="5">
    <location>
        <position position="33"/>
    </location>
</feature>
<feature type="modified residue" description="Phosphoserine" evidence="5">
    <location>
        <position position="95"/>
    </location>
</feature>
<feature type="modified residue" description="Phosphoserine" evidence="5">
    <location>
        <position position="97"/>
    </location>
</feature>